<accession>P53534</accession>
<feature type="initiator methionine" description="Removed" evidence="2">
    <location>
        <position position="1"/>
    </location>
</feature>
<feature type="chain" id="PRO_0000188538" description="Glycogen phosphorylase, brain form">
    <location>
        <begin position="2"/>
        <end position="838" status="greater than"/>
    </location>
</feature>
<feature type="region of interest" description="Pyridoxal 5'-phosphate" evidence="2">
    <location>
        <begin position="677"/>
        <end position="678"/>
    </location>
</feature>
<feature type="binding site" evidence="2">
    <location>
        <position position="43"/>
    </location>
    <ligand>
        <name>AMP</name>
        <dbReference type="ChEBI" id="CHEBI:456215"/>
        <note>ligand shared between dimeric partners</note>
    </ligand>
</feature>
<feature type="binding site" description="in other chain" evidence="2">
    <location>
        <position position="197"/>
    </location>
    <ligand>
        <name>AMP</name>
        <dbReference type="ChEBI" id="CHEBI:456215"/>
        <note>ligand shared between dimeric partners</note>
    </ligand>
</feature>
<feature type="binding site" description="in other chain" evidence="2">
    <location>
        <position position="310"/>
    </location>
    <ligand>
        <name>AMP</name>
        <dbReference type="ChEBI" id="CHEBI:456215"/>
        <note>ligand shared between dimeric partners</note>
    </ligand>
</feature>
<feature type="binding site" evidence="2">
    <location>
        <position position="569"/>
    </location>
    <ligand>
        <name>pyridoxal 5'-phosphate</name>
        <dbReference type="ChEBI" id="CHEBI:597326"/>
    </ligand>
</feature>
<feature type="site" description="Participates in a stacking interaction with the adenine ring of AMP" evidence="2">
    <location>
        <position position="76"/>
    </location>
</feature>
<feature type="site" description="Involved in the association of subunits" evidence="1">
    <location>
        <position position="109"/>
    </location>
</feature>
<feature type="site" description="Involved in the association of subunits" evidence="1">
    <location>
        <position position="143"/>
    </location>
</feature>
<feature type="site" description="May be involved in allosteric control" evidence="1">
    <location>
        <position position="156"/>
    </location>
</feature>
<feature type="modified residue" description="N-acetylalanine" evidence="2">
    <location>
        <position position="2"/>
    </location>
</feature>
<feature type="modified residue" description="Phosphoserine" evidence="7">
    <location>
        <position position="15"/>
    </location>
</feature>
<feature type="modified residue" description="Phosphotyrosine" evidence="4">
    <location>
        <position position="197"/>
    </location>
</feature>
<feature type="modified residue" description="Phosphotyrosine" evidence="4">
    <location>
        <position position="473"/>
    </location>
</feature>
<feature type="modified residue" description="Phosphoserine" evidence="7">
    <location>
        <position position="524"/>
    </location>
</feature>
<feature type="modified residue" description="N6-(pyridoxal phosphate)lysine" evidence="2">
    <location>
        <position position="681"/>
    </location>
</feature>
<feature type="sequence conflict" description="In Ref. 3; AAA40815." evidence="5" ref="3">
    <original>N</original>
    <variation>K</variation>
    <location>
        <position position="589"/>
    </location>
</feature>
<feature type="non-terminal residue">
    <location>
        <position position="838"/>
    </location>
</feature>
<reference key="1">
    <citation type="journal article" date="1993" name="Biochim. Biophys. Acta">
        <title>Comparative analysis of species-independent, isozyme-specific amino-acid substitutions in mammalian muscle, brain and liver glycogen phosphorylases.</title>
        <authorList>
            <person name="Hudson J.W."/>
            <person name="Hefferon K.L."/>
            <person name="Crerar M.M."/>
        </authorList>
    </citation>
    <scope>NUCLEOTIDE SEQUENCE [MRNA]</scope>
</reference>
<reference key="2">
    <citation type="submission" date="2006-12" db="UniProtKB">
        <authorList>
            <person name="Lubec G."/>
            <person name="Afjehi-Sadat L."/>
        </authorList>
    </citation>
    <scope>PROTEIN SEQUENCE OF 50-60</scope>
    <scope>IDENTIFICATION BY MASS SPECTROMETRY</scope>
    <source>
        <strain>Sprague-Dawley</strain>
        <tissue>Spinal cord</tissue>
    </source>
</reference>
<reference key="3">
    <citation type="journal article" date="1988" name="Genome">
        <title>Studies on the expression and evolution of the glycogen phosphorylase gene family in the rat.</title>
        <authorList>
            <person name="Crerar M.M."/>
            <person name="Hudson J.W."/>
            <person name="Matthews K.E."/>
            <person name="David E.S."/>
            <person name="Golding G.B."/>
        </authorList>
    </citation>
    <scope>NUCLEOTIDE SEQUENCE [MRNA] OF 570-729</scope>
    <source>
        <strain>Sprague-Dawley</strain>
        <tissue>Brain</tissue>
    </source>
</reference>
<reference key="4">
    <citation type="journal article" date="2012" name="Nat. Commun.">
        <title>Quantitative maps of protein phosphorylation sites across 14 different rat organs and tissues.</title>
        <authorList>
            <person name="Lundby A."/>
            <person name="Secher A."/>
            <person name="Lage K."/>
            <person name="Nordsborg N.B."/>
            <person name="Dmytriyev A."/>
            <person name="Lundby C."/>
            <person name="Olsen J.V."/>
        </authorList>
    </citation>
    <scope>PHOSPHORYLATION [LARGE SCALE ANALYSIS] AT SER-15 AND SER-524</scope>
    <scope>IDENTIFICATION BY MASS SPECTROMETRY [LARGE SCALE ANALYSIS]</scope>
</reference>
<name>PYGB_RAT</name>
<dbReference type="EC" id="2.4.1.1"/>
<dbReference type="EMBL" id="L10668">
    <property type="protein sequence ID" value="AAA41252.1"/>
    <property type="molecule type" value="mRNA"/>
</dbReference>
<dbReference type="EMBL" id="M27726">
    <property type="protein sequence ID" value="AAA40815.1"/>
    <property type="molecule type" value="mRNA"/>
</dbReference>
<dbReference type="PIR" id="S37300">
    <property type="entry name" value="S37300"/>
</dbReference>
<dbReference type="RefSeq" id="NP_037320.1">
    <property type="nucleotide sequence ID" value="NM_013188.1"/>
</dbReference>
<dbReference type="SMR" id="P53534"/>
<dbReference type="BioGRID" id="247767">
    <property type="interactions" value="8"/>
</dbReference>
<dbReference type="FunCoup" id="P53534">
    <property type="interactions" value="1634"/>
</dbReference>
<dbReference type="IntAct" id="P53534">
    <property type="interactions" value="4"/>
</dbReference>
<dbReference type="MINT" id="P53534"/>
<dbReference type="STRING" id="10116.ENSRNOP00000010158"/>
<dbReference type="CAZy" id="GT35">
    <property type="family name" value="Glycosyltransferase Family 35"/>
</dbReference>
<dbReference type="GlyGen" id="P53534">
    <property type="glycosylation" value="1 site, 1 O-linked glycan (1 site)"/>
</dbReference>
<dbReference type="iPTMnet" id="P53534"/>
<dbReference type="jPOST" id="P53534"/>
<dbReference type="PaxDb" id="10116-ENSRNOP00000010158"/>
<dbReference type="PeptideAtlas" id="P53534"/>
<dbReference type="GeneID" id="25739"/>
<dbReference type="KEGG" id="rno:25739"/>
<dbReference type="UCSC" id="RGD:3460">
    <property type="organism name" value="rat"/>
</dbReference>
<dbReference type="AGR" id="RGD:3460"/>
<dbReference type="CTD" id="5834"/>
<dbReference type="RGD" id="3460">
    <property type="gene designation" value="Pygb"/>
</dbReference>
<dbReference type="eggNOG" id="KOG2099">
    <property type="taxonomic scope" value="Eukaryota"/>
</dbReference>
<dbReference type="InParanoid" id="P53534"/>
<dbReference type="OrthoDB" id="14150at9989"/>
<dbReference type="Reactome" id="R-RNO-6798695">
    <property type="pathway name" value="Neutrophil degranulation"/>
</dbReference>
<dbReference type="Proteomes" id="UP000002494">
    <property type="component" value="Unplaced"/>
</dbReference>
<dbReference type="GO" id="GO:0030424">
    <property type="term" value="C:axon"/>
    <property type="evidence" value="ECO:0000314"/>
    <property type="project" value="RGD"/>
</dbReference>
<dbReference type="GO" id="GO:0005737">
    <property type="term" value="C:cytoplasm"/>
    <property type="evidence" value="ECO:0000266"/>
    <property type="project" value="RGD"/>
</dbReference>
<dbReference type="GO" id="GO:0030246">
    <property type="term" value="F:carbohydrate binding"/>
    <property type="evidence" value="ECO:0000314"/>
    <property type="project" value="RGD"/>
</dbReference>
<dbReference type="GO" id="GO:0008184">
    <property type="term" value="F:glycogen phosphorylase activity"/>
    <property type="evidence" value="ECO:0000314"/>
    <property type="project" value="RGD"/>
</dbReference>
<dbReference type="GO" id="GO:0042802">
    <property type="term" value="F:identical protein binding"/>
    <property type="evidence" value="ECO:0000353"/>
    <property type="project" value="RGD"/>
</dbReference>
<dbReference type="GO" id="GO:0030170">
    <property type="term" value="F:pyridoxal phosphate binding"/>
    <property type="evidence" value="ECO:0000318"/>
    <property type="project" value="GO_Central"/>
</dbReference>
<dbReference type="GO" id="GO:0005980">
    <property type="term" value="P:glycogen catabolic process"/>
    <property type="evidence" value="ECO:0000314"/>
    <property type="project" value="RGD"/>
</dbReference>
<dbReference type="GO" id="GO:0005977">
    <property type="term" value="P:glycogen metabolic process"/>
    <property type="evidence" value="ECO:0000314"/>
    <property type="project" value="RGD"/>
</dbReference>
<dbReference type="CDD" id="cd04300">
    <property type="entry name" value="GT35_Glycogen_Phosphorylase"/>
    <property type="match status" value="1"/>
</dbReference>
<dbReference type="FunFam" id="3.40.50.2000:FF:000005">
    <property type="entry name" value="Alpha-1,4 glucan phosphorylase"/>
    <property type="match status" value="1"/>
</dbReference>
<dbReference type="FunFam" id="3.40.50.2000:FF:000153">
    <property type="entry name" value="Alpha-1,4 glucan phosphorylase"/>
    <property type="match status" value="1"/>
</dbReference>
<dbReference type="FunFam" id="3.40.50.2000:FF:000197">
    <property type="entry name" value="Alpha-1,4 glucan phosphorylase"/>
    <property type="match status" value="1"/>
</dbReference>
<dbReference type="Gene3D" id="3.40.50.2000">
    <property type="entry name" value="Glycogen Phosphorylase B"/>
    <property type="match status" value="2"/>
</dbReference>
<dbReference type="InterPro" id="IPR011833">
    <property type="entry name" value="Glycg_phsphrylas"/>
</dbReference>
<dbReference type="InterPro" id="IPR000811">
    <property type="entry name" value="Glyco_trans_35"/>
</dbReference>
<dbReference type="InterPro" id="IPR035090">
    <property type="entry name" value="Pyridoxal_P_attach_site"/>
</dbReference>
<dbReference type="NCBIfam" id="TIGR02093">
    <property type="entry name" value="P_ylase"/>
    <property type="match status" value="1"/>
</dbReference>
<dbReference type="PANTHER" id="PTHR11468">
    <property type="entry name" value="GLYCOGEN PHOSPHORYLASE"/>
    <property type="match status" value="1"/>
</dbReference>
<dbReference type="PANTHER" id="PTHR11468:SF29">
    <property type="entry name" value="GLYCOGEN PHOSPHORYLASE, BRAIN FORM"/>
    <property type="match status" value="1"/>
</dbReference>
<dbReference type="Pfam" id="PF00343">
    <property type="entry name" value="Phosphorylase"/>
    <property type="match status" value="1"/>
</dbReference>
<dbReference type="PIRSF" id="PIRSF000460">
    <property type="entry name" value="Pprylas_GlgP"/>
    <property type="match status" value="1"/>
</dbReference>
<dbReference type="SUPFAM" id="SSF53756">
    <property type="entry name" value="UDP-Glycosyltransferase/glycogen phosphorylase"/>
    <property type="match status" value="1"/>
</dbReference>
<dbReference type="PROSITE" id="PS00102">
    <property type="entry name" value="PHOSPHORYLASE"/>
    <property type="match status" value="1"/>
</dbReference>
<proteinExistence type="evidence at protein level"/>
<sequence length="838" mass="96174">MAKPLTDSERQKQISVRGIAGLGDVAEVRKSFNRHLHFTLVKDRNVATPRDYFFALAHTVRDHLVGRWIRTQQHYYERDPKRIYYLSLEFYMGRTLQNTMVNLGLQTACDEATYQLGLDLEELEEIEEDAGLGNGGLGRLAACFLDSMATLGLAAYGYGIRYEFGIFNQKIVNGWQVEEADDWLRYGNPWEKARPEYMLPVHFYGRVEHTPNGVLWLDTQVVLAMPYDTPVPGYKNNTVNTMRLWSAKAPNDFKLKDFNVGDYIEAVLDRNLAENISRVLYPNDNFFEGKELRLKQEYFVVAATLQDIIRRFKSSKFGCRDPVRTCFETFPDKVAIQLNDTHPALSIPELMRILVDVEKVDWDKAWEITKKTCAYTNHTVLPEALERWPVSMFEKLLPRHLEIIYAINQRHLDHVAALFPGDVDRLRRMSVIEEGDCKRINMAHLCVIGSHAVNGVARIHSEIVKQSVFKDFYELEPEKFQNKTNGITPRRWLLLCNPGLAEIIVERIGEGFLTDLSQLKKLLSLVDDEAFIRDVAKVKQENKLKFSAQLEKEYKVKINPCSMFDVHVKRIHEYKRQLLNCLHIITLYNRIKKDPTKTFVPRTVMIGGKAAPGYHMAKMIIKLVTSIGDVVNHDPVVGDRLRVIFLENYRVSLAEKVIPAADLSQQISTAGTEASGTGNMKFMLNGALTIGTMDGANVEMAEEAGEENLFIFGMRVEDVEALDQKGYNAQEFYERLPELRQAVDQISSGFFSPKDPDCFKDVVNMLMYHDRFKVFADYEAYIQCQAQVDHLYRNPKDWTKKVIRNIACSGKFSSDRTITEYAREIWGVEPSDLQIPPP</sequence>
<evidence type="ECO:0000250" key="1"/>
<evidence type="ECO:0000250" key="2">
    <source>
        <dbReference type="UniProtKB" id="P11216"/>
    </source>
</evidence>
<evidence type="ECO:0000250" key="3">
    <source>
        <dbReference type="UniProtKB" id="P11217"/>
    </source>
</evidence>
<evidence type="ECO:0000250" key="4">
    <source>
        <dbReference type="UniProtKB" id="Q8CI94"/>
    </source>
</evidence>
<evidence type="ECO:0000305" key="5"/>
<evidence type="ECO:0000305" key="6">
    <source>
    </source>
</evidence>
<evidence type="ECO:0007744" key="7">
    <source>
    </source>
</evidence>
<gene>
    <name type="primary">Pygb</name>
</gene>
<organism>
    <name type="scientific">Rattus norvegicus</name>
    <name type="common">Rat</name>
    <dbReference type="NCBI Taxonomy" id="10116"/>
    <lineage>
        <taxon>Eukaryota</taxon>
        <taxon>Metazoa</taxon>
        <taxon>Chordata</taxon>
        <taxon>Craniata</taxon>
        <taxon>Vertebrata</taxon>
        <taxon>Euteleostomi</taxon>
        <taxon>Mammalia</taxon>
        <taxon>Eutheria</taxon>
        <taxon>Euarchontoglires</taxon>
        <taxon>Glires</taxon>
        <taxon>Rodentia</taxon>
        <taxon>Myomorpha</taxon>
        <taxon>Muroidea</taxon>
        <taxon>Muridae</taxon>
        <taxon>Murinae</taxon>
        <taxon>Rattus</taxon>
    </lineage>
</organism>
<keyword id="KW-0007">Acetylation</keyword>
<keyword id="KW-0021">Allosteric enzyme</keyword>
<keyword id="KW-0119">Carbohydrate metabolism</keyword>
<keyword id="KW-0903">Direct protein sequencing</keyword>
<keyword id="KW-0321">Glycogen metabolism</keyword>
<keyword id="KW-0328">Glycosyltransferase</keyword>
<keyword id="KW-0597">Phosphoprotein</keyword>
<keyword id="KW-0663">Pyridoxal phosphate</keyword>
<keyword id="KW-1185">Reference proteome</keyword>
<keyword id="KW-0808">Transferase</keyword>
<comment type="function">
    <text evidence="2 6">Glycogen phosphorylase that regulates glycogen mobilization (By similarity). Phosphorylase is an important allosteric enzyme in carbohydrate metabolism. Enzymes from different sources differ in their regulatory mechanisms and in their natural substrates. However, all known phosphorylases share catalytic and structural properties.</text>
</comment>
<comment type="catalytic activity">
    <reaction>
        <text>[(1-&gt;4)-alpha-D-glucosyl](n) + phosphate = [(1-&gt;4)-alpha-D-glucosyl](n-1) + alpha-D-glucose 1-phosphate</text>
        <dbReference type="Rhea" id="RHEA:41732"/>
        <dbReference type="Rhea" id="RHEA-COMP:9584"/>
        <dbReference type="Rhea" id="RHEA-COMP:9586"/>
        <dbReference type="ChEBI" id="CHEBI:15444"/>
        <dbReference type="ChEBI" id="CHEBI:43474"/>
        <dbReference type="ChEBI" id="CHEBI:58601"/>
        <dbReference type="EC" id="2.4.1.1"/>
    </reaction>
</comment>
<comment type="cofactor">
    <cofactor>
        <name>pyridoxal 5'-phosphate</name>
        <dbReference type="ChEBI" id="CHEBI:597326"/>
    </cofactor>
</comment>
<comment type="activity regulation">
    <text>Activity of phosphorylase is controlled both by allosteric means (through the non-covalent binding of metabolites) and by covalent modification. Thus AMP allosterically activates, whereas ATP, ADP, and glucose-6-phosphate allosterically inhibit, phosphorylase B.</text>
</comment>
<comment type="subunit">
    <text>Homodimer. Dimers associate into a tetramer to form the enzymatically active phosphorylase A.</text>
</comment>
<comment type="PTM">
    <text evidence="3">Phosphorylation of Ser-15 converts phosphorylase B (unphosphorylated) to phosphorylase A.</text>
</comment>
<comment type="similarity">
    <text evidence="5">Belongs to the glycogen phosphorylase family.</text>
</comment>
<protein>
    <recommendedName>
        <fullName>Glycogen phosphorylase, brain form</fullName>
        <ecNumber>2.4.1.1</ecNumber>
    </recommendedName>
</protein>